<protein>
    <recommendedName>
        <fullName evidence="1">Threonylcarbamoyl-AMP synthase</fullName>
        <shortName evidence="1">TC-AMP synthase</shortName>
        <ecNumber evidence="1">2.7.7.87</ecNumber>
    </recommendedName>
    <alternativeName>
        <fullName evidence="1">L-threonylcarbamoyladenylate synthase</fullName>
    </alternativeName>
    <alternativeName>
        <fullName evidence="1">t(6)A37 threonylcarbamoyladenosine biosynthesis protein TsaC</fullName>
    </alternativeName>
    <alternativeName>
        <fullName evidence="1">tRNA threonylcarbamoyladenosine biosynthesis protein TsaC</fullName>
    </alternativeName>
</protein>
<comment type="function">
    <text evidence="1">Required for the formation of a threonylcarbamoyl group on adenosine at position 37 (t(6)A37) in tRNAs that read codons beginning with adenine. Catalyzes the conversion of L-threonine, HCO(3)(-)/CO(2) and ATP to give threonylcarbamoyl-AMP (TC-AMP) as the acyladenylate intermediate, with the release of diphosphate.</text>
</comment>
<comment type="catalytic activity">
    <reaction evidence="1">
        <text>L-threonine + hydrogencarbonate + ATP = L-threonylcarbamoyladenylate + diphosphate + H2O</text>
        <dbReference type="Rhea" id="RHEA:36407"/>
        <dbReference type="ChEBI" id="CHEBI:15377"/>
        <dbReference type="ChEBI" id="CHEBI:17544"/>
        <dbReference type="ChEBI" id="CHEBI:30616"/>
        <dbReference type="ChEBI" id="CHEBI:33019"/>
        <dbReference type="ChEBI" id="CHEBI:57926"/>
        <dbReference type="ChEBI" id="CHEBI:73682"/>
        <dbReference type="EC" id="2.7.7.87"/>
    </reaction>
</comment>
<comment type="subcellular location">
    <subcellularLocation>
        <location evidence="1">Cytoplasm</location>
    </subcellularLocation>
</comment>
<comment type="similarity">
    <text evidence="1">Belongs to the SUA5 family. TsaC subfamily.</text>
</comment>
<proteinExistence type="inferred from homology"/>
<sequence length="185" mass="20562">MVSSWRVQQAAQNIRAGAVIAYPTEAVWGLGCDPWDEEAVYRLLAIKLRPVEKGLILIADNIRQFDFLFEDFPELWLDRMASTWPGPNTWLVPHQNLLPEWITGIHETVALRVTDHPTVRELCALVGPLISTSANPAGRPAARSRLRVEQYFRGQINGVLGGSLGGRRNPSVIRDIATGQVMRAG</sequence>
<feature type="chain" id="PRO_0000352962" description="Threonylcarbamoyl-AMP synthase">
    <location>
        <begin position="1"/>
        <end position="185"/>
    </location>
</feature>
<feature type="domain" description="YrdC-like" evidence="1">
    <location>
        <begin position="4"/>
        <end position="185"/>
    </location>
</feature>
<evidence type="ECO:0000255" key="1">
    <source>
        <dbReference type="HAMAP-Rule" id="MF_01852"/>
    </source>
</evidence>
<organism>
    <name type="scientific">Pseudomonas syringae pv. tomato (strain ATCC BAA-871 / DC3000)</name>
    <dbReference type="NCBI Taxonomy" id="223283"/>
    <lineage>
        <taxon>Bacteria</taxon>
        <taxon>Pseudomonadati</taxon>
        <taxon>Pseudomonadota</taxon>
        <taxon>Gammaproteobacteria</taxon>
        <taxon>Pseudomonadales</taxon>
        <taxon>Pseudomonadaceae</taxon>
        <taxon>Pseudomonas</taxon>
    </lineage>
</organism>
<keyword id="KW-0067">ATP-binding</keyword>
<keyword id="KW-0963">Cytoplasm</keyword>
<keyword id="KW-0547">Nucleotide-binding</keyword>
<keyword id="KW-0548">Nucleotidyltransferase</keyword>
<keyword id="KW-1185">Reference proteome</keyword>
<keyword id="KW-0808">Transferase</keyword>
<keyword id="KW-0819">tRNA processing</keyword>
<accession>Q88B46</accession>
<reference key="1">
    <citation type="journal article" date="2003" name="Proc. Natl. Acad. Sci. U.S.A.">
        <title>The complete genome sequence of the Arabidopsis and tomato pathogen Pseudomonas syringae pv. tomato DC3000.</title>
        <authorList>
            <person name="Buell C.R."/>
            <person name="Joardar V."/>
            <person name="Lindeberg M."/>
            <person name="Selengut J."/>
            <person name="Paulsen I.T."/>
            <person name="Gwinn M.L."/>
            <person name="Dodson R.J."/>
            <person name="DeBoy R.T."/>
            <person name="Durkin A.S."/>
            <person name="Kolonay J.F."/>
            <person name="Madupu R."/>
            <person name="Daugherty S.C."/>
            <person name="Brinkac L.M."/>
            <person name="Beanan M.J."/>
            <person name="Haft D.H."/>
            <person name="Nelson W.C."/>
            <person name="Davidsen T.M."/>
            <person name="Zafar N."/>
            <person name="Zhou L."/>
            <person name="Liu J."/>
            <person name="Yuan Q."/>
            <person name="Khouri H.M."/>
            <person name="Fedorova N.B."/>
            <person name="Tran B."/>
            <person name="Russell D."/>
            <person name="Berry K.J."/>
            <person name="Utterback T.R."/>
            <person name="Van Aken S.E."/>
            <person name="Feldblyum T.V."/>
            <person name="D'Ascenzo M."/>
            <person name="Deng W.-L."/>
            <person name="Ramos A.R."/>
            <person name="Alfano J.R."/>
            <person name="Cartinhour S."/>
            <person name="Chatterjee A.K."/>
            <person name="Delaney T.P."/>
            <person name="Lazarowitz S.G."/>
            <person name="Martin G.B."/>
            <person name="Schneider D.J."/>
            <person name="Tang X."/>
            <person name="Bender C.L."/>
            <person name="White O."/>
            <person name="Fraser C.M."/>
            <person name="Collmer A."/>
        </authorList>
    </citation>
    <scope>NUCLEOTIDE SEQUENCE [LARGE SCALE GENOMIC DNA]</scope>
    <source>
        <strain>ATCC BAA-871 / DC3000</strain>
    </source>
</reference>
<name>TSAC_PSESM</name>
<gene>
    <name evidence="1" type="primary">tsaC</name>
    <name type="synonym">rimN</name>
    <name type="ordered locus">PSPTO_0174</name>
</gene>
<dbReference type="EC" id="2.7.7.87" evidence="1"/>
<dbReference type="EMBL" id="AE016853">
    <property type="protein sequence ID" value="AAO53728.1"/>
    <property type="molecule type" value="Genomic_DNA"/>
</dbReference>
<dbReference type="RefSeq" id="NP_790033.1">
    <property type="nucleotide sequence ID" value="NC_004578.1"/>
</dbReference>
<dbReference type="RefSeq" id="WP_011103022.1">
    <property type="nucleotide sequence ID" value="NC_004578.1"/>
</dbReference>
<dbReference type="SMR" id="Q88B46"/>
<dbReference type="STRING" id="223283.PSPTO_0174"/>
<dbReference type="GeneID" id="1181782"/>
<dbReference type="KEGG" id="pst:PSPTO_0174"/>
<dbReference type="PATRIC" id="fig|223283.9.peg.180"/>
<dbReference type="eggNOG" id="COG0009">
    <property type="taxonomic scope" value="Bacteria"/>
</dbReference>
<dbReference type="HOGENOM" id="CLU_031397_6_0_6"/>
<dbReference type="OrthoDB" id="9814580at2"/>
<dbReference type="PhylomeDB" id="Q88B46"/>
<dbReference type="Proteomes" id="UP000002515">
    <property type="component" value="Chromosome"/>
</dbReference>
<dbReference type="GO" id="GO:0005737">
    <property type="term" value="C:cytoplasm"/>
    <property type="evidence" value="ECO:0007669"/>
    <property type="project" value="UniProtKB-SubCell"/>
</dbReference>
<dbReference type="GO" id="GO:0005524">
    <property type="term" value="F:ATP binding"/>
    <property type="evidence" value="ECO:0007669"/>
    <property type="project" value="UniProtKB-UniRule"/>
</dbReference>
<dbReference type="GO" id="GO:0003725">
    <property type="term" value="F:double-stranded RNA binding"/>
    <property type="evidence" value="ECO:0007669"/>
    <property type="project" value="InterPro"/>
</dbReference>
<dbReference type="GO" id="GO:0061710">
    <property type="term" value="F:L-threonylcarbamoyladenylate synthase"/>
    <property type="evidence" value="ECO:0007669"/>
    <property type="project" value="UniProtKB-EC"/>
</dbReference>
<dbReference type="GO" id="GO:0000049">
    <property type="term" value="F:tRNA binding"/>
    <property type="evidence" value="ECO:0007669"/>
    <property type="project" value="TreeGrafter"/>
</dbReference>
<dbReference type="GO" id="GO:0006450">
    <property type="term" value="P:regulation of translational fidelity"/>
    <property type="evidence" value="ECO:0007669"/>
    <property type="project" value="TreeGrafter"/>
</dbReference>
<dbReference type="GO" id="GO:0002949">
    <property type="term" value="P:tRNA threonylcarbamoyladenosine modification"/>
    <property type="evidence" value="ECO:0007669"/>
    <property type="project" value="UniProtKB-UniRule"/>
</dbReference>
<dbReference type="FunFam" id="3.90.870.10:FF:000004">
    <property type="entry name" value="Threonylcarbamoyl-AMP synthase"/>
    <property type="match status" value="1"/>
</dbReference>
<dbReference type="Gene3D" id="3.90.870.10">
    <property type="entry name" value="DHBP synthase"/>
    <property type="match status" value="1"/>
</dbReference>
<dbReference type="HAMAP" id="MF_01852">
    <property type="entry name" value="TsaC"/>
    <property type="match status" value="1"/>
</dbReference>
<dbReference type="InterPro" id="IPR017945">
    <property type="entry name" value="DHBP_synth_RibB-like_a/b_dom"/>
</dbReference>
<dbReference type="InterPro" id="IPR006070">
    <property type="entry name" value="Sua5-like_dom"/>
</dbReference>
<dbReference type="InterPro" id="IPR023535">
    <property type="entry name" value="TC-AMP_synthase"/>
</dbReference>
<dbReference type="InterPro" id="IPR050156">
    <property type="entry name" value="TC-AMP_synthase_SUA5"/>
</dbReference>
<dbReference type="PANTHER" id="PTHR17490">
    <property type="entry name" value="SUA5"/>
    <property type="match status" value="1"/>
</dbReference>
<dbReference type="PANTHER" id="PTHR17490:SF18">
    <property type="entry name" value="THREONYLCARBAMOYL-AMP SYNTHASE"/>
    <property type="match status" value="1"/>
</dbReference>
<dbReference type="Pfam" id="PF01300">
    <property type="entry name" value="Sua5_yciO_yrdC"/>
    <property type="match status" value="1"/>
</dbReference>
<dbReference type="SUPFAM" id="SSF55821">
    <property type="entry name" value="YrdC/RibB"/>
    <property type="match status" value="1"/>
</dbReference>
<dbReference type="PROSITE" id="PS51163">
    <property type="entry name" value="YRDC"/>
    <property type="match status" value="1"/>
</dbReference>